<accession>A6R104</accession>
<evidence type="ECO:0000255" key="1">
    <source>
        <dbReference type="HAMAP-Rule" id="MF_03052"/>
    </source>
</evidence>
<evidence type="ECO:0000256" key="2">
    <source>
        <dbReference type="SAM" id="MobiDB-lite"/>
    </source>
</evidence>
<evidence type="ECO:0000305" key="3"/>
<dbReference type="EC" id="2.8.1.12" evidence="1"/>
<dbReference type="EMBL" id="CH476657">
    <property type="protein sequence ID" value="EDN06781.1"/>
    <property type="status" value="ALT_SEQ"/>
    <property type="molecule type" value="Genomic_DNA"/>
</dbReference>
<dbReference type="SMR" id="A6R104"/>
<dbReference type="STRING" id="339724.A6R104"/>
<dbReference type="KEGG" id="aje:HCAG_03311"/>
<dbReference type="HOGENOM" id="CLU_754336_0_0_1"/>
<dbReference type="OrthoDB" id="9960at299071"/>
<dbReference type="UniPathway" id="UPA00344"/>
<dbReference type="Proteomes" id="UP000009297">
    <property type="component" value="Unassembled WGS sequence"/>
</dbReference>
<dbReference type="GO" id="GO:1990140">
    <property type="term" value="C:molybdopterin synthase complex"/>
    <property type="evidence" value="ECO:0000250"/>
    <property type="project" value="UniProtKB"/>
</dbReference>
<dbReference type="GO" id="GO:0030366">
    <property type="term" value="F:molybdopterin synthase activity"/>
    <property type="evidence" value="ECO:0007669"/>
    <property type="project" value="UniProtKB-UniRule"/>
</dbReference>
<dbReference type="GO" id="GO:0006777">
    <property type="term" value="P:Mo-molybdopterin cofactor biosynthetic process"/>
    <property type="evidence" value="ECO:0000250"/>
    <property type="project" value="UniProtKB"/>
</dbReference>
<dbReference type="CDD" id="cd00756">
    <property type="entry name" value="MoaE"/>
    <property type="match status" value="1"/>
</dbReference>
<dbReference type="Gene3D" id="3.90.1170.40">
    <property type="entry name" value="Molybdopterin biosynthesis MoaE subunit"/>
    <property type="match status" value="1"/>
</dbReference>
<dbReference type="HAMAP" id="MF_03052">
    <property type="entry name" value="MOC2B"/>
    <property type="match status" value="1"/>
</dbReference>
<dbReference type="InterPro" id="IPR036563">
    <property type="entry name" value="MoaE_sf"/>
</dbReference>
<dbReference type="InterPro" id="IPR028888">
    <property type="entry name" value="MOCS2B_euk"/>
</dbReference>
<dbReference type="InterPro" id="IPR003448">
    <property type="entry name" value="Mopterin_biosynth_MoaE"/>
</dbReference>
<dbReference type="PANTHER" id="PTHR23404">
    <property type="entry name" value="MOLYBDOPTERIN SYNTHASE RELATED"/>
    <property type="match status" value="1"/>
</dbReference>
<dbReference type="Pfam" id="PF02391">
    <property type="entry name" value="MoaE"/>
    <property type="match status" value="1"/>
</dbReference>
<dbReference type="SUPFAM" id="SSF54690">
    <property type="entry name" value="Molybdopterin synthase subunit MoaE"/>
    <property type="match status" value="1"/>
</dbReference>
<keyword id="KW-0963">Cytoplasm</keyword>
<keyword id="KW-0501">Molybdenum cofactor biosynthesis</keyword>
<keyword id="KW-1185">Reference proteome</keyword>
<keyword id="KW-0808">Transferase</keyword>
<name>MOC2B_AJECN</name>
<organism>
    <name type="scientific">Ajellomyces capsulatus (strain NAm1 / WU24)</name>
    <name type="common">Darling's disease fungus</name>
    <name type="synonym">Histoplasma capsulatum</name>
    <dbReference type="NCBI Taxonomy" id="2059318"/>
    <lineage>
        <taxon>Eukaryota</taxon>
        <taxon>Fungi</taxon>
        <taxon>Dikarya</taxon>
        <taxon>Ascomycota</taxon>
        <taxon>Pezizomycotina</taxon>
        <taxon>Eurotiomycetes</taxon>
        <taxon>Eurotiomycetidae</taxon>
        <taxon>Onygenales</taxon>
        <taxon>Ajellomycetaceae</taxon>
        <taxon>Histoplasma</taxon>
    </lineage>
</organism>
<comment type="function">
    <text evidence="1">Catalytic subunit of the molybdopterin synthase complex, a complex that catalyzes the conversion of precursor Z into molybdopterin. Acts by mediating the incorporation of 2 sulfur atoms from thiocarboxylated MOCS2A into precursor Z to generate a dithiolene group.</text>
</comment>
<comment type="catalytic activity">
    <reaction evidence="1">
        <text>2 [molybdopterin-synthase sulfur-carrier protein]-C-terminal-Gly-aminoethanethioate + cyclic pyranopterin phosphate + H2O = molybdopterin + 2 [molybdopterin-synthase sulfur-carrier protein]-C-terminal Gly-Gly + 2 H(+)</text>
        <dbReference type="Rhea" id="RHEA:26333"/>
        <dbReference type="Rhea" id="RHEA-COMP:12202"/>
        <dbReference type="Rhea" id="RHEA-COMP:19907"/>
        <dbReference type="ChEBI" id="CHEBI:15377"/>
        <dbReference type="ChEBI" id="CHEBI:15378"/>
        <dbReference type="ChEBI" id="CHEBI:58698"/>
        <dbReference type="ChEBI" id="CHEBI:59648"/>
        <dbReference type="ChEBI" id="CHEBI:90778"/>
        <dbReference type="ChEBI" id="CHEBI:232372"/>
        <dbReference type="EC" id="2.8.1.12"/>
    </reaction>
</comment>
<comment type="pathway">
    <text evidence="1">Cofactor biosynthesis; molybdopterin biosynthesis.</text>
</comment>
<comment type="subunit">
    <text evidence="1">Heterotetramer; composed of 2 small (MOCS2A) and 2 large (MOCS2B) subunits.</text>
</comment>
<comment type="subcellular location">
    <subcellularLocation>
        <location evidence="1">Cytoplasm</location>
    </subcellularLocation>
</comment>
<comment type="similarity">
    <text evidence="1">Belongs to the MoaE family. MOCS2B subfamily.</text>
</comment>
<comment type="sequence caution" evidence="3">
    <conflict type="erroneous gene model prediction">
        <sequence resource="EMBL-CDS" id="EDN06781"/>
    </conflict>
</comment>
<sequence>MQHPTLQPEVDPNPVVSSSSSSSSSNPLPAHLNPANYPQTRYFSDSNIHLELTYNPLDPTKSLAQIRSPHAGANVLFLGTTRSTFDNRPVARLTYTSYAPLALRTLEKIARGAVTKYQLCGISISHRLGEVRVAEESIAIAVAAGHRRPAWRAGEEVLEECKAAVEIWKREEFIGAGAGEGEGEWRANRDTDSQGNCRGDKVAEG</sequence>
<proteinExistence type="inferred from homology"/>
<gene>
    <name evidence="1" type="primary">cnxH</name>
    <name type="ORF">HCAG_03311</name>
</gene>
<reference key="1">
    <citation type="journal article" date="2009" name="Genome Res.">
        <title>Comparative genomic analyses of the human fungal pathogens Coccidioides and their relatives.</title>
        <authorList>
            <person name="Sharpton T.J."/>
            <person name="Stajich J.E."/>
            <person name="Rounsley S.D."/>
            <person name="Gardner M.J."/>
            <person name="Wortman J.R."/>
            <person name="Jordar V.S."/>
            <person name="Maiti R."/>
            <person name="Kodira C.D."/>
            <person name="Neafsey D.E."/>
            <person name="Zeng Q."/>
            <person name="Hung C.-Y."/>
            <person name="McMahan C."/>
            <person name="Muszewska A."/>
            <person name="Grynberg M."/>
            <person name="Mandel M.A."/>
            <person name="Kellner E.M."/>
            <person name="Barker B.M."/>
            <person name="Galgiani J.N."/>
            <person name="Orbach M.J."/>
            <person name="Kirkland T.N."/>
            <person name="Cole G.T."/>
            <person name="Henn M.R."/>
            <person name="Birren B.W."/>
            <person name="Taylor J.W."/>
        </authorList>
    </citation>
    <scope>NUCLEOTIDE SEQUENCE [LARGE SCALE GENOMIC DNA]</scope>
    <source>
        <strain>NAm1 / WU24</strain>
    </source>
</reference>
<feature type="chain" id="PRO_0000369348" description="Molybdopterin synthase catalytic subunit">
    <location>
        <begin position="1"/>
        <end position="205"/>
    </location>
</feature>
<feature type="region of interest" description="Disordered" evidence="2">
    <location>
        <begin position="1"/>
        <end position="36"/>
    </location>
</feature>
<feature type="region of interest" description="Disordered" evidence="2">
    <location>
        <begin position="179"/>
        <end position="205"/>
    </location>
</feature>
<feature type="compositionally biased region" description="Basic and acidic residues" evidence="2">
    <location>
        <begin position="183"/>
        <end position="205"/>
    </location>
</feature>
<feature type="binding site" evidence="1">
    <location>
        <begin position="146"/>
        <end position="147"/>
    </location>
    <ligand>
        <name>substrate</name>
    </ligand>
</feature>
<feature type="binding site" evidence="1">
    <location>
        <position position="162"/>
    </location>
    <ligand>
        <name>substrate</name>
    </ligand>
</feature>
<feature type="binding site" evidence="1">
    <location>
        <begin position="169"/>
        <end position="171"/>
    </location>
    <ligand>
        <name>substrate</name>
    </ligand>
</feature>
<protein>
    <recommendedName>
        <fullName evidence="1">Molybdopterin synthase catalytic subunit</fullName>
        <ecNumber evidence="1">2.8.1.12</ecNumber>
    </recommendedName>
    <alternativeName>
        <fullName evidence="1">Common component for nitrate reductase and xanthine dehydrogenase protein H</fullName>
    </alternativeName>
    <alternativeName>
        <fullName evidence="1">Molybdenum cofactor synthesis protein 2 large subunit</fullName>
    </alternativeName>
    <alternativeName>
        <fullName evidence="1">Molybdenum cofactor synthesis protein 2B</fullName>
        <shortName evidence="1">MOCS2B</shortName>
    </alternativeName>
</protein>